<dbReference type="EC" id="2.7.1.130" evidence="1"/>
<dbReference type="EMBL" id="CP001612">
    <property type="protein sequence ID" value="ACP53829.1"/>
    <property type="molecule type" value="Genomic_DNA"/>
</dbReference>
<dbReference type="RefSeq" id="WP_012719970.1">
    <property type="nucleotide sequence ID" value="NC_012633.1"/>
</dbReference>
<dbReference type="SMR" id="C3PLI9"/>
<dbReference type="KEGG" id="raf:RAF_ORF0998"/>
<dbReference type="HOGENOM" id="CLU_038816_0_0_5"/>
<dbReference type="UniPathway" id="UPA00359">
    <property type="reaction ID" value="UER00482"/>
</dbReference>
<dbReference type="Proteomes" id="UP000002305">
    <property type="component" value="Chromosome"/>
</dbReference>
<dbReference type="GO" id="GO:0005886">
    <property type="term" value="C:plasma membrane"/>
    <property type="evidence" value="ECO:0007669"/>
    <property type="project" value="TreeGrafter"/>
</dbReference>
<dbReference type="GO" id="GO:0005524">
    <property type="term" value="F:ATP binding"/>
    <property type="evidence" value="ECO:0007669"/>
    <property type="project" value="UniProtKB-UniRule"/>
</dbReference>
<dbReference type="GO" id="GO:0009029">
    <property type="term" value="F:tetraacyldisaccharide 4'-kinase activity"/>
    <property type="evidence" value="ECO:0007669"/>
    <property type="project" value="UniProtKB-UniRule"/>
</dbReference>
<dbReference type="GO" id="GO:0009245">
    <property type="term" value="P:lipid A biosynthetic process"/>
    <property type="evidence" value="ECO:0007669"/>
    <property type="project" value="UniProtKB-UniRule"/>
</dbReference>
<dbReference type="GO" id="GO:0009244">
    <property type="term" value="P:lipopolysaccharide core region biosynthetic process"/>
    <property type="evidence" value="ECO:0007669"/>
    <property type="project" value="TreeGrafter"/>
</dbReference>
<dbReference type="HAMAP" id="MF_00409">
    <property type="entry name" value="LpxK"/>
    <property type="match status" value="1"/>
</dbReference>
<dbReference type="InterPro" id="IPR003758">
    <property type="entry name" value="LpxK"/>
</dbReference>
<dbReference type="InterPro" id="IPR027417">
    <property type="entry name" value="P-loop_NTPase"/>
</dbReference>
<dbReference type="NCBIfam" id="TIGR00682">
    <property type="entry name" value="lpxK"/>
    <property type="match status" value="1"/>
</dbReference>
<dbReference type="PANTHER" id="PTHR42724">
    <property type="entry name" value="TETRAACYLDISACCHARIDE 4'-KINASE"/>
    <property type="match status" value="1"/>
</dbReference>
<dbReference type="PANTHER" id="PTHR42724:SF1">
    <property type="entry name" value="TETRAACYLDISACCHARIDE 4'-KINASE, MITOCHONDRIAL-RELATED"/>
    <property type="match status" value="1"/>
</dbReference>
<dbReference type="Pfam" id="PF02606">
    <property type="entry name" value="LpxK"/>
    <property type="match status" value="1"/>
</dbReference>
<dbReference type="SUPFAM" id="SSF52540">
    <property type="entry name" value="P-loop containing nucleoside triphosphate hydrolases"/>
    <property type="match status" value="1"/>
</dbReference>
<keyword id="KW-0067">ATP-binding</keyword>
<keyword id="KW-0418">Kinase</keyword>
<keyword id="KW-0441">Lipid A biosynthesis</keyword>
<keyword id="KW-0444">Lipid biosynthesis</keyword>
<keyword id="KW-0443">Lipid metabolism</keyword>
<keyword id="KW-0547">Nucleotide-binding</keyword>
<keyword id="KW-0808">Transferase</keyword>
<evidence type="ECO:0000255" key="1">
    <source>
        <dbReference type="HAMAP-Rule" id="MF_00409"/>
    </source>
</evidence>
<proteinExistence type="inferred from homology"/>
<sequence>MIKLLYPEFWQKRNIIAYLLLPISVIYQFLGYLRASLARPIMLPAKVICVGNCSVGGTGKTQIVMYLAKLLKARNVSFVIVTKAYGSNLTSATTIHQGHTALEVGDEGVILAKYGAVIATKNIKEIVPLLNELKPDIIIVDDFLQNPYFHKDFTIVSVDSQRLFGNGFLIPAGPLRQYPNKALDAADLIFLVSSHQDKIPNILTPYVNKLINAQIVPSNNIDKTKNYFAFSGIGNPERFFATLKNYGLNITGYKIFPDHYNYLQADLENLYSLAKEHNATLVTTRKDHVKFNDLNNNIVCLDVELSINHPDLLNEKIFKKA</sequence>
<feature type="chain" id="PRO_1000205973" description="Tetraacyldisaccharide 4'-kinase">
    <location>
        <begin position="1"/>
        <end position="321"/>
    </location>
</feature>
<feature type="binding site" evidence="1">
    <location>
        <begin position="54"/>
        <end position="61"/>
    </location>
    <ligand>
        <name>ATP</name>
        <dbReference type="ChEBI" id="CHEBI:30616"/>
    </ligand>
</feature>
<gene>
    <name evidence="1" type="primary">lpxK</name>
    <name type="ordered locus">RAF_ORF0998</name>
</gene>
<protein>
    <recommendedName>
        <fullName evidence="1">Tetraacyldisaccharide 4'-kinase</fullName>
        <ecNumber evidence="1">2.7.1.130</ecNumber>
    </recommendedName>
    <alternativeName>
        <fullName evidence="1">Lipid A 4'-kinase</fullName>
    </alternativeName>
</protein>
<comment type="function">
    <text evidence="1">Transfers the gamma-phosphate of ATP to the 4'-position of a tetraacyldisaccharide 1-phosphate intermediate (termed DS-1-P) to form tetraacyldisaccharide 1,4'-bis-phosphate (lipid IVA).</text>
</comment>
<comment type="catalytic activity">
    <reaction evidence="1">
        <text>a lipid A disaccharide + ATP = a lipid IVA + ADP + H(+)</text>
        <dbReference type="Rhea" id="RHEA:67840"/>
        <dbReference type="ChEBI" id="CHEBI:15378"/>
        <dbReference type="ChEBI" id="CHEBI:30616"/>
        <dbReference type="ChEBI" id="CHEBI:176343"/>
        <dbReference type="ChEBI" id="CHEBI:176425"/>
        <dbReference type="ChEBI" id="CHEBI:456216"/>
        <dbReference type="EC" id="2.7.1.130"/>
    </reaction>
</comment>
<comment type="pathway">
    <text evidence="1">Glycolipid biosynthesis; lipid IV(A) biosynthesis; lipid IV(A) from (3R)-3-hydroxytetradecanoyl-[acyl-carrier-protein] and UDP-N-acetyl-alpha-D-glucosamine: step 6/6.</text>
</comment>
<comment type="similarity">
    <text evidence="1">Belongs to the LpxK family.</text>
</comment>
<reference key="1">
    <citation type="journal article" date="2009" name="BMC Genomics">
        <title>Analysis of the Rickettsia africae genome reveals that virulence acquisition in Rickettsia species may be explained by genome reduction.</title>
        <authorList>
            <person name="Fournier P.-E."/>
            <person name="El Karkouri K."/>
            <person name="Leroy Q."/>
            <person name="Robert C."/>
            <person name="Giumelli B."/>
            <person name="Renesto P."/>
            <person name="Socolovschi C."/>
            <person name="Parola P."/>
            <person name="Audic S."/>
            <person name="Raoult D."/>
        </authorList>
    </citation>
    <scope>NUCLEOTIDE SEQUENCE [LARGE SCALE GENOMIC DNA]</scope>
    <source>
        <strain>ESF-5</strain>
    </source>
</reference>
<name>LPXK_RICAE</name>
<accession>C3PLI9</accession>
<organism>
    <name type="scientific">Rickettsia africae (strain ESF-5)</name>
    <dbReference type="NCBI Taxonomy" id="347255"/>
    <lineage>
        <taxon>Bacteria</taxon>
        <taxon>Pseudomonadati</taxon>
        <taxon>Pseudomonadota</taxon>
        <taxon>Alphaproteobacteria</taxon>
        <taxon>Rickettsiales</taxon>
        <taxon>Rickettsiaceae</taxon>
        <taxon>Rickettsieae</taxon>
        <taxon>Rickettsia</taxon>
        <taxon>spotted fever group</taxon>
    </lineage>
</organism>